<protein>
    <recommendedName>
        <fullName>Muscarinic acetylcholine receptor M4</fullName>
    </recommendedName>
</protein>
<comment type="function">
    <text>The muscarinic acetylcholine receptor mediates various cellular responses, including inhibition of adenylate cyclase, breakdown of phosphoinositides and modulation of potassium channels through the action of G proteins. Primary transducing effect is inhibition of adenylate cyclase.</text>
</comment>
<comment type="subcellular location">
    <subcellularLocation>
        <location>Cell membrane</location>
        <topology>Multi-pass membrane protein</topology>
    </subcellularLocation>
    <subcellularLocation>
        <location>Postsynaptic cell membrane</location>
        <topology>Multi-pass membrane protein</topology>
    </subcellularLocation>
</comment>
<comment type="similarity">
    <text evidence="3">Belongs to the G-protein coupled receptor 1 family. Muscarinic acetylcholine receptor subfamily. CHRM4 sub-subfamily.</text>
</comment>
<keyword id="KW-1003">Cell membrane</keyword>
<keyword id="KW-1015">Disulfide bond</keyword>
<keyword id="KW-0297">G-protein coupled receptor</keyword>
<keyword id="KW-0325">Glycoprotein</keyword>
<keyword id="KW-0472">Membrane</keyword>
<keyword id="KW-0597">Phosphoprotein</keyword>
<keyword id="KW-0628">Postsynaptic cell membrane</keyword>
<keyword id="KW-0675">Receptor</keyword>
<keyword id="KW-1185">Reference proteome</keyword>
<keyword id="KW-0770">Synapse</keyword>
<keyword id="KW-0807">Transducer</keyword>
<keyword id="KW-0812">Transmembrane</keyword>
<keyword id="KW-1133">Transmembrane helix</keyword>
<name>ACM4_XENLA</name>
<accession>P30544</accession>
<proteinExistence type="inferred from homology"/>
<reference key="1">
    <citation type="journal article" date="1994" name="FEBS Lett.">
        <title>Cloning of a Xenopus laevis muscarinic receptor encoded by an intronless gene.</title>
        <authorList>
            <person name="Herrera L."/>
            <person name="Carvallo P."/>
            <person name="Antonelli M."/>
            <person name="Olate J."/>
        </authorList>
    </citation>
    <scope>NUCLEOTIDE SEQUENCE [GENOMIC DNA]</scope>
    <source>
        <tissue>Ovary</tissue>
    </source>
</reference>
<organism>
    <name type="scientific">Xenopus laevis</name>
    <name type="common">African clawed frog</name>
    <dbReference type="NCBI Taxonomy" id="8355"/>
    <lineage>
        <taxon>Eukaryota</taxon>
        <taxon>Metazoa</taxon>
        <taxon>Chordata</taxon>
        <taxon>Craniata</taxon>
        <taxon>Vertebrata</taxon>
        <taxon>Euteleostomi</taxon>
        <taxon>Amphibia</taxon>
        <taxon>Batrachia</taxon>
        <taxon>Anura</taxon>
        <taxon>Pipoidea</taxon>
        <taxon>Pipidae</taxon>
        <taxon>Xenopodinae</taxon>
        <taxon>Xenopus</taxon>
        <taxon>Xenopus</taxon>
    </lineage>
</organism>
<dbReference type="EMBL" id="X65865">
    <property type="protein sequence ID" value="CAA46694.1"/>
    <property type="molecule type" value="Genomic_DNA"/>
</dbReference>
<dbReference type="PIR" id="S48657">
    <property type="entry name" value="S48657"/>
</dbReference>
<dbReference type="GlyCosmos" id="P30544">
    <property type="glycosylation" value="3 sites, No reported glycans"/>
</dbReference>
<dbReference type="Proteomes" id="UP000186698">
    <property type="component" value="Unplaced"/>
</dbReference>
<dbReference type="GO" id="GO:0030425">
    <property type="term" value="C:dendrite"/>
    <property type="evidence" value="ECO:0000318"/>
    <property type="project" value="GO_Central"/>
</dbReference>
<dbReference type="GO" id="GO:0005886">
    <property type="term" value="C:plasma membrane"/>
    <property type="evidence" value="ECO:0000318"/>
    <property type="project" value="GO_Central"/>
</dbReference>
<dbReference type="GO" id="GO:0045211">
    <property type="term" value="C:postsynaptic membrane"/>
    <property type="evidence" value="ECO:0007669"/>
    <property type="project" value="UniProtKB-SubCell"/>
</dbReference>
<dbReference type="GO" id="GO:0045202">
    <property type="term" value="C:synapse"/>
    <property type="evidence" value="ECO:0000318"/>
    <property type="project" value="GO_Central"/>
</dbReference>
<dbReference type="GO" id="GO:0016907">
    <property type="term" value="F:G protein-coupled acetylcholine receptor activity"/>
    <property type="evidence" value="ECO:0000318"/>
    <property type="project" value="GO_Central"/>
</dbReference>
<dbReference type="GO" id="GO:0004993">
    <property type="term" value="F:G protein-coupled serotonin receptor activity"/>
    <property type="evidence" value="ECO:0007669"/>
    <property type="project" value="TreeGrafter"/>
</dbReference>
<dbReference type="GO" id="GO:0007197">
    <property type="term" value="P:adenylate cyclase-inhibiting G protein-coupled acetylcholine receptor signaling pathway"/>
    <property type="evidence" value="ECO:0000318"/>
    <property type="project" value="GO_Central"/>
</dbReference>
<dbReference type="GO" id="GO:0007268">
    <property type="term" value="P:chemical synaptic transmission"/>
    <property type="evidence" value="ECO:0000318"/>
    <property type="project" value="GO_Central"/>
</dbReference>
<dbReference type="GO" id="GO:0007187">
    <property type="term" value="P:G protein-coupled receptor signaling pathway, coupled to cyclic nucleotide second messenger"/>
    <property type="evidence" value="ECO:0000318"/>
    <property type="project" value="GO_Central"/>
</dbReference>
<dbReference type="GO" id="GO:0040012">
    <property type="term" value="P:regulation of locomotion"/>
    <property type="evidence" value="ECO:0007669"/>
    <property type="project" value="InterPro"/>
</dbReference>
<dbReference type="CDD" id="cd15298">
    <property type="entry name" value="7tmA_mAChR_M4"/>
    <property type="match status" value="1"/>
</dbReference>
<dbReference type="FunFam" id="1.20.1070.10:FF:000038">
    <property type="entry name" value="Muscarinic acetylcholine receptor"/>
    <property type="match status" value="1"/>
</dbReference>
<dbReference type="FunFam" id="1.20.1070.10:FF:000041">
    <property type="entry name" value="Muscarinic acetylcholine receptor"/>
    <property type="match status" value="1"/>
</dbReference>
<dbReference type="Gene3D" id="1.20.1070.10">
    <property type="entry name" value="Rhodopsin 7-helix transmembrane proteins"/>
    <property type="match status" value="2"/>
</dbReference>
<dbReference type="InterPro" id="IPR000276">
    <property type="entry name" value="GPCR_Rhodpsn"/>
</dbReference>
<dbReference type="InterPro" id="IPR017452">
    <property type="entry name" value="GPCR_Rhodpsn_7TM"/>
</dbReference>
<dbReference type="InterPro" id="IPR001432">
    <property type="entry name" value="Musac_Ach_M4_rcpt"/>
</dbReference>
<dbReference type="InterPro" id="IPR000995">
    <property type="entry name" value="Musac_Ach_rcpt"/>
</dbReference>
<dbReference type="PANTHER" id="PTHR24247">
    <property type="entry name" value="5-HYDROXYTRYPTAMINE RECEPTOR"/>
    <property type="match status" value="1"/>
</dbReference>
<dbReference type="PANTHER" id="PTHR24247:SF180">
    <property type="entry name" value="MUSCARINIC ACETYLCHOLINE RECEPTOR M4"/>
    <property type="match status" value="1"/>
</dbReference>
<dbReference type="Pfam" id="PF00001">
    <property type="entry name" value="7tm_1"/>
    <property type="match status" value="1"/>
</dbReference>
<dbReference type="PRINTS" id="PR00237">
    <property type="entry name" value="GPCRRHODOPSN"/>
</dbReference>
<dbReference type="PRINTS" id="PR00243">
    <property type="entry name" value="MUSCARINICR"/>
</dbReference>
<dbReference type="PRINTS" id="PR00541">
    <property type="entry name" value="MUSCRINICM4R"/>
</dbReference>
<dbReference type="SUPFAM" id="SSF81321">
    <property type="entry name" value="Family A G protein-coupled receptor-like"/>
    <property type="match status" value="1"/>
</dbReference>
<dbReference type="PROSITE" id="PS00237">
    <property type="entry name" value="G_PROTEIN_RECEP_F1_1"/>
    <property type="match status" value="1"/>
</dbReference>
<dbReference type="PROSITE" id="PS50262">
    <property type="entry name" value="G_PROTEIN_RECEP_F1_2"/>
    <property type="match status" value="1"/>
</dbReference>
<evidence type="ECO:0000250" key="1"/>
<evidence type="ECO:0000255" key="2"/>
<evidence type="ECO:0000255" key="3">
    <source>
        <dbReference type="PROSITE-ProRule" id="PRU00521"/>
    </source>
</evidence>
<evidence type="ECO:0000256" key="4">
    <source>
        <dbReference type="SAM" id="MobiDB-lite"/>
    </source>
</evidence>
<sequence>MENDTWENESSASNHSIDETIVEIPGKYQTMEMIFIATVTGSLSLVTVVGNILVMLSIKVNRQLQTVNNYFLFSLACADLIIGVFSMNLYSLYIIKGYWPLGPIVCDLWLALDYVVSNASVMNLLIISLERXFCVTKPLTYPARRTTKMAGLMIAAAWLLSFELWAPAILFWQFIVGQRTVPSGECYIQFLSNPAVTFGTAIAAFYLPVVIMTILYIHISLASRSRVRRHCPETRQEKKKPISSMKSLLIKQTKNIPKQDAGDKVVEKKNGVSNGKIEKSMTNLQTAEEKETSNESSSASLSHNPPEKQPLSEASSGVVLAPTQSMPPLPAKANTASKWSKIKIVTKQTGNECVTAIEIVPECAIPLPEQANNRPVNVARKFASIARNQVRKKRQMAAREKKVTRTIFAILLAFIITWTPYNVMVLINTFCQTCIPETIWYIGYWLCYVNSTINPACYALCNATFKKTFKHLLMCQYKSIGTAR</sequence>
<gene>
    <name type="primary">chrm4</name>
</gene>
<feature type="chain" id="PRO_0000069041" description="Muscarinic acetylcholine receptor M4">
    <location>
        <begin position="1"/>
        <end position="484"/>
    </location>
</feature>
<feature type="topological domain" description="Extracellular" evidence="1">
    <location>
        <begin position="1"/>
        <end position="32"/>
    </location>
</feature>
<feature type="transmembrane region" description="Helical; Name=1" evidence="1">
    <location>
        <begin position="33"/>
        <end position="55"/>
    </location>
</feature>
<feature type="topological domain" description="Cytoplasmic" evidence="1">
    <location>
        <begin position="56"/>
        <end position="69"/>
    </location>
</feature>
<feature type="transmembrane region" description="Helical; Name=2" evidence="1">
    <location>
        <begin position="70"/>
        <end position="90"/>
    </location>
</feature>
<feature type="topological domain" description="Extracellular" evidence="1">
    <location>
        <begin position="91"/>
        <end position="107"/>
    </location>
</feature>
<feature type="transmembrane region" description="Helical; Name=3" evidence="1">
    <location>
        <begin position="108"/>
        <end position="129"/>
    </location>
</feature>
<feature type="topological domain" description="Cytoplasmic" evidence="1">
    <location>
        <begin position="130"/>
        <end position="149"/>
    </location>
</feature>
<feature type="transmembrane region" description="Helical; Name=4" evidence="1">
    <location>
        <begin position="150"/>
        <end position="172"/>
    </location>
</feature>
<feature type="topological domain" description="Extracellular" evidence="1">
    <location>
        <begin position="173"/>
        <end position="194"/>
    </location>
</feature>
<feature type="transmembrane region" description="Helical; Name=5" evidence="1">
    <location>
        <begin position="195"/>
        <end position="217"/>
    </location>
</feature>
<feature type="topological domain" description="Cytoplasmic" evidence="1">
    <location>
        <begin position="218"/>
        <end position="406"/>
    </location>
</feature>
<feature type="transmembrane region" description="Helical; Name=6" evidence="1">
    <location>
        <begin position="407"/>
        <end position="427"/>
    </location>
</feature>
<feature type="topological domain" description="Extracellular" evidence="1">
    <location>
        <begin position="428"/>
        <end position="441"/>
    </location>
</feature>
<feature type="transmembrane region" description="Helical; Name=7" evidence="1">
    <location>
        <begin position="442"/>
        <end position="461"/>
    </location>
</feature>
<feature type="topological domain" description="Cytoplasmic" evidence="1">
    <location>
        <begin position="462"/>
        <end position="484"/>
    </location>
</feature>
<feature type="region of interest" description="Disordered" evidence="4">
    <location>
        <begin position="255"/>
        <end position="316"/>
    </location>
</feature>
<feature type="compositionally biased region" description="Basic and acidic residues" evidence="4">
    <location>
        <begin position="260"/>
        <end position="270"/>
    </location>
</feature>
<feature type="glycosylation site" description="N-linked (GlcNAc...) asparagine" evidence="2">
    <location>
        <position position="3"/>
    </location>
</feature>
<feature type="glycosylation site" description="N-linked (GlcNAc...) asparagine" evidence="2">
    <location>
        <position position="8"/>
    </location>
</feature>
<feature type="glycosylation site" description="N-linked (GlcNAc...) asparagine" evidence="2">
    <location>
        <position position="14"/>
    </location>
</feature>
<feature type="disulfide bond" evidence="3">
    <location>
        <begin position="106"/>
        <end position="186"/>
    </location>
</feature>